<gene>
    <name evidence="1" type="primary">mtlD</name>
    <name type="ordered locus">EcHS_A3807</name>
</gene>
<keyword id="KW-0007">Acetylation</keyword>
<keyword id="KW-0520">NAD</keyword>
<keyword id="KW-0560">Oxidoreductase</keyword>
<sequence>MKALHFGAGNIGRGFIGKLLADAGIQLTFADVNQVVLDALNARHSYQVHVVGETEQVDTVSGVNAVSSIGDDVVDLIAQVDLVTTAVGPVVLERIAPAIAKGLVKRKEQSNESPLNIIACENMVRGTTQLKGHVMNALPEDAKAWVEEHVGFVDSAVDRIVPPSASATNDPLEVTVETFSEWIVDKTQFKGALPNIPGMELTDNLMAFVERKLFTLNTGHAITAYLGKLAGHQTIRDAILDEKIRAVVKGAMEESGAVLIKRYGFDADKHAAYIQKILGRFENPYLKDDVERVGRQPLRKLSAGDRLIKPLLGTLEYGLPHKNLIEGIAAAMHFRSEDDPQAQELAALIADKGPQAALAQISGLDANSEVVSEAVTAYKAMQ</sequence>
<protein>
    <recommendedName>
        <fullName evidence="1">Mannitol-1-phosphate 5-dehydrogenase</fullName>
        <ecNumber evidence="1">1.1.1.17</ecNumber>
    </recommendedName>
</protein>
<reference key="1">
    <citation type="journal article" date="2008" name="J. Bacteriol.">
        <title>The pangenome structure of Escherichia coli: comparative genomic analysis of E. coli commensal and pathogenic isolates.</title>
        <authorList>
            <person name="Rasko D.A."/>
            <person name="Rosovitz M.J."/>
            <person name="Myers G.S.A."/>
            <person name="Mongodin E.F."/>
            <person name="Fricke W.F."/>
            <person name="Gajer P."/>
            <person name="Crabtree J."/>
            <person name="Sebaihia M."/>
            <person name="Thomson N.R."/>
            <person name="Chaudhuri R."/>
            <person name="Henderson I.R."/>
            <person name="Sperandio V."/>
            <person name="Ravel J."/>
        </authorList>
    </citation>
    <scope>NUCLEOTIDE SEQUENCE [LARGE SCALE GENOMIC DNA]</scope>
    <source>
        <strain>HS</strain>
    </source>
</reference>
<name>MTLD_ECOHS</name>
<evidence type="ECO:0000255" key="1">
    <source>
        <dbReference type="HAMAP-Rule" id="MF_00196"/>
    </source>
</evidence>
<dbReference type="EC" id="1.1.1.17" evidence="1"/>
<dbReference type="EMBL" id="CP000802">
    <property type="protein sequence ID" value="ABV08014.1"/>
    <property type="molecule type" value="Genomic_DNA"/>
</dbReference>
<dbReference type="RefSeq" id="WP_000645438.1">
    <property type="nucleotide sequence ID" value="NC_009800.1"/>
</dbReference>
<dbReference type="SMR" id="A8A660"/>
<dbReference type="KEGG" id="ecx:EcHS_A3807"/>
<dbReference type="HOGENOM" id="CLU_036089_2_0_6"/>
<dbReference type="GO" id="GO:0005829">
    <property type="term" value="C:cytosol"/>
    <property type="evidence" value="ECO:0007669"/>
    <property type="project" value="TreeGrafter"/>
</dbReference>
<dbReference type="GO" id="GO:0008926">
    <property type="term" value="F:mannitol-1-phosphate 5-dehydrogenase activity"/>
    <property type="evidence" value="ECO:0007669"/>
    <property type="project" value="UniProtKB-UniRule"/>
</dbReference>
<dbReference type="GO" id="GO:0019592">
    <property type="term" value="P:mannitol catabolic process"/>
    <property type="evidence" value="ECO:0007669"/>
    <property type="project" value="TreeGrafter"/>
</dbReference>
<dbReference type="FunFam" id="1.10.1040.10:FF:000009">
    <property type="entry name" value="Mannitol-1-phosphate 5-dehydrogenase"/>
    <property type="match status" value="1"/>
</dbReference>
<dbReference type="FunFam" id="3.40.50.720:FF:000075">
    <property type="entry name" value="Mannitol-1-phosphate 5-dehydrogenase"/>
    <property type="match status" value="1"/>
</dbReference>
<dbReference type="Gene3D" id="1.10.1040.10">
    <property type="entry name" value="N-(1-d-carboxylethyl)-l-norvaline Dehydrogenase, domain 2"/>
    <property type="match status" value="1"/>
</dbReference>
<dbReference type="Gene3D" id="3.40.50.720">
    <property type="entry name" value="NAD(P)-binding Rossmann-like Domain"/>
    <property type="match status" value="1"/>
</dbReference>
<dbReference type="HAMAP" id="MF_00196">
    <property type="entry name" value="Mannitol_dehydrog"/>
    <property type="match status" value="1"/>
</dbReference>
<dbReference type="InterPro" id="IPR008927">
    <property type="entry name" value="6-PGluconate_DH-like_C_sf"/>
</dbReference>
<dbReference type="InterPro" id="IPR013328">
    <property type="entry name" value="6PGD_dom2"/>
</dbReference>
<dbReference type="InterPro" id="IPR023028">
    <property type="entry name" value="Mannitol_1_phos_5_DH"/>
</dbReference>
<dbReference type="InterPro" id="IPR000669">
    <property type="entry name" value="Mannitol_DH"/>
</dbReference>
<dbReference type="InterPro" id="IPR013118">
    <property type="entry name" value="Mannitol_DH_C"/>
</dbReference>
<dbReference type="InterPro" id="IPR023027">
    <property type="entry name" value="Mannitol_DH_CS"/>
</dbReference>
<dbReference type="InterPro" id="IPR013131">
    <property type="entry name" value="Mannitol_DH_N"/>
</dbReference>
<dbReference type="InterPro" id="IPR036291">
    <property type="entry name" value="NAD(P)-bd_dom_sf"/>
</dbReference>
<dbReference type="NCBIfam" id="NF002646">
    <property type="entry name" value="PRK02318.1-2"/>
    <property type="match status" value="1"/>
</dbReference>
<dbReference type="NCBIfam" id="NF002647">
    <property type="entry name" value="PRK02318.1-3"/>
    <property type="match status" value="1"/>
</dbReference>
<dbReference type="NCBIfam" id="NF002648">
    <property type="entry name" value="PRK02318.1-4"/>
    <property type="match status" value="1"/>
</dbReference>
<dbReference type="NCBIfam" id="NF002650">
    <property type="entry name" value="PRK02318.2-2"/>
    <property type="match status" value="1"/>
</dbReference>
<dbReference type="NCBIfam" id="NF002652">
    <property type="entry name" value="PRK02318.2-5"/>
    <property type="match status" value="1"/>
</dbReference>
<dbReference type="PANTHER" id="PTHR30524:SF0">
    <property type="entry name" value="ALTRONATE OXIDOREDUCTASE-RELATED"/>
    <property type="match status" value="1"/>
</dbReference>
<dbReference type="PANTHER" id="PTHR30524">
    <property type="entry name" value="MANNITOL-1-PHOSPHATE 5-DEHYDROGENASE"/>
    <property type="match status" value="1"/>
</dbReference>
<dbReference type="Pfam" id="PF01232">
    <property type="entry name" value="Mannitol_dh"/>
    <property type="match status" value="1"/>
</dbReference>
<dbReference type="Pfam" id="PF08125">
    <property type="entry name" value="Mannitol_dh_C"/>
    <property type="match status" value="1"/>
</dbReference>
<dbReference type="PRINTS" id="PR00084">
    <property type="entry name" value="MTLDHDRGNASE"/>
</dbReference>
<dbReference type="SUPFAM" id="SSF48179">
    <property type="entry name" value="6-phosphogluconate dehydrogenase C-terminal domain-like"/>
    <property type="match status" value="1"/>
</dbReference>
<dbReference type="SUPFAM" id="SSF51735">
    <property type="entry name" value="NAD(P)-binding Rossmann-fold domains"/>
    <property type="match status" value="1"/>
</dbReference>
<dbReference type="PROSITE" id="PS00974">
    <property type="entry name" value="MANNITOL_DHGENASE"/>
    <property type="match status" value="1"/>
</dbReference>
<accession>A8A660</accession>
<organism>
    <name type="scientific">Escherichia coli O9:H4 (strain HS)</name>
    <dbReference type="NCBI Taxonomy" id="331112"/>
    <lineage>
        <taxon>Bacteria</taxon>
        <taxon>Pseudomonadati</taxon>
        <taxon>Pseudomonadota</taxon>
        <taxon>Gammaproteobacteria</taxon>
        <taxon>Enterobacterales</taxon>
        <taxon>Enterobacteriaceae</taxon>
        <taxon>Escherichia</taxon>
    </lineage>
</organism>
<proteinExistence type="inferred from homology"/>
<feature type="chain" id="PRO_1000058532" description="Mannitol-1-phosphate 5-dehydrogenase">
    <location>
        <begin position="1"/>
        <end position="382"/>
    </location>
</feature>
<feature type="binding site" evidence="1">
    <location>
        <begin position="3"/>
        <end position="14"/>
    </location>
    <ligand>
        <name>NAD(+)</name>
        <dbReference type="ChEBI" id="CHEBI:57540"/>
    </ligand>
</feature>
<feature type="modified residue" description="N6-acetyllysine" evidence="1">
    <location>
        <position position="269"/>
    </location>
</feature>
<comment type="catalytic activity">
    <reaction evidence="1">
        <text>D-mannitol 1-phosphate + NAD(+) = beta-D-fructose 6-phosphate + NADH + H(+)</text>
        <dbReference type="Rhea" id="RHEA:19661"/>
        <dbReference type="ChEBI" id="CHEBI:15378"/>
        <dbReference type="ChEBI" id="CHEBI:57540"/>
        <dbReference type="ChEBI" id="CHEBI:57634"/>
        <dbReference type="ChEBI" id="CHEBI:57945"/>
        <dbReference type="ChEBI" id="CHEBI:61381"/>
        <dbReference type="EC" id="1.1.1.17"/>
    </reaction>
</comment>
<comment type="similarity">
    <text evidence="1">Belongs to the mannitol dehydrogenase family.</text>
</comment>